<comment type="function">
    <text evidence="1">May regulate transcription elongation by RNA polymerase II. May enhance transcriptional pausing at sites proximal to the promoter, which may in turn facilitate the assembly of an elongation competent RNA polymerase II complex (By similarity).</text>
</comment>
<comment type="subcellular location">
    <subcellularLocation>
        <location evidence="1">Nucleus</location>
    </subcellularLocation>
</comment>
<comment type="alternative products">
    <event type="alternative splicing"/>
    <isoform>
        <id>Q8LCQ3-1</id>
        <name>1</name>
        <sequence type="displayed"/>
    </isoform>
    <text>A number of isoforms are produced. According to EST sequences.</text>
</comment>
<comment type="similarity">
    <text evidence="3">Belongs to the SPT4 family.</text>
</comment>
<evidence type="ECO:0000250" key="1"/>
<evidence type="ECO:0000255" key="2"/>
<evidence type="ECO:0000305" key="3"/>
<feature type="chain" id="PRO_0000210335" description="Transcription elongation factor SPT4 homolog 1">
    <location>
        <begin position="1"/>
        <end position="116"/>
    </location>
</feature>
<feature type="zinc finger region" description="C4-type" evidence="2">
    <location>
        <begin position="19"/>
        <end position="39"/>
    </location>
</feature>
<feature type="sequence conflict" description="In Ref. 5; AAM63465." evidence="3" ref="5">
    <original>N</original>
    <variation>D</variation>
    <location>
        <position position="60"/>
    </location>
</feature>
<feature type="sequence conflict" description="In Ref. 5; AAM63465." evidence="3" ref="5">
    <original>A</original>
    <variation>T</variation>
    <location>
        <position position="94"/>
    </location>
</feature>
<proteinExistence type="inferred from homology"/>
<gene>
    <name type="ordered locus">At5g08565</name>
    <name type="ORF">MAH20.24</name>
</gene>
<organism>
    <name type="scientific">Arabidopsis thaliana</name>
    <name type="common">Mouse-ear cress</name>
    <dbReference type="NCBI Taxonomy" id="3702"/>
    <lineage>
        <taxon>Eukaryota</taxon>
        <taxon>Viridiplantae</taxon>
        <taxon>Streptophyta</taxon>
        <taxon>Embryophyta</taxon>
        <taxon>Tracheophyta</taxon>
        <taxon>Spermatophyta</taxon>
        <taxon>Magnoliopsida</taxon>
        <taxon>eudicotyledons</taxon>
        <taxon>Gunneridae</taxon>
        <taxon>Pentapetalae</taxon>
        <taxon>rosids</taxon>
        <taxon>malvids</taxon>
        <taxon>Brassicales</taxon>
        <taxon>Brassicaceae</taxon>
        <taxon>Camelineae</taxon>
        <taxon>Arabidopsis</taxon>
    </lineage>
</organism>
<protein>
    <recommendedName>
        <fullName>Transcription elongation factor SPT4 homolog 1</fullName>
    </recommendedName>
</protein>
<reference key="1">
    <citation type="journal article" date="1997" name="DNA Res.">
        <title>Structural analysis of Arabidopsis thaliana chromosome 5. II. Sequence features of the regions of 1,044,062 bp covered by thirteen physically assigned P1 clones.</title>
        <authorList>
            <person name="Kotani H."/>
            <person name="Nakamura Y."/>
            <person name="Sato S."/>
            <person name="Kaneko T."/>
            <person name="Asamizu E."/>
            <person name="Miyajima N."/>
            <person name="Tabata S."/>
        </authorList>
    </citation>
    <scope>NUCLEOTIDE SEQUENCE [LARGE SCALE GENOMIC DNA]</scope>
    <source>
        <strain>cv. Columbia</strain>
    </source>
</reference>
<reference key="2">
    <citation type="journal article" date="2017" name="Plant J.">
        <title>Araport11: a complete reannotation of the Arabidopsis thaliana reference genome.</title>
        <authorList>
            <person name="Cheng C.Y."/>
            <person name="Krishnakumar V."/>
            <person name="Chan A.P."/>
            <person name="Thibaud-Nissen F."/>
            <person name="Schobel S."/>
            <person name="Town C.D."/>
        </authorList>
    </citation>
    <scope>GENOME REANNOTATION</scope>
    <source>
        <strain>cv. Columbia</strain>
    </source>
</reference>
<reference key="3">
    <citation type="submission" date="2006-03" db="EMBL/GenBank/DDBJ databases">
        <title>Arabidopsis ORF clones.</title>
        <authorList>
            <person name="Kim C.J."/>
            <person name="Chen H."/>
            <person name="Shinn P."/>
            <person name="Ecker J.R."/>
        </authorList>
    </citation>
    <scope>NUCLEOTIDE SEQUENCE [LARGE SCALE MRNA]</scope>
    <source>
        <strain>cv. Columbia</strain>
    </source>
</reference>
<reference key="4">
    <citation type="submission" date="2006-07" db="EMBL/GenBank/DDBJ databases">
        <title>Large-scale analysis of RIKEN Arabidopsis full-length (RAFL) cDNAs.</title>
        <authorList>
            <person name="Totoki Y."/>
            <person name="Seki M."/>
            <person name="Ishida J."/>
            <person name="Nakajima M."/>
            <person name="Enju A."/>
            <person name="Kamiya A."/>
            <person name="Narusaka M."/>
            <person name="Shin-i T."/>
            <person name="Nakagawa M."/>
            <person name="Sakamoto N."/>
            <person name="Oishi K."/>
            <person name="Kohara Y."/>
            <person name="Kobayashi M."/>
            <person name="Toyoda A."/>
            <person name="Sakaki Y."/>
            <person name="Sakurai T."/>
            <person name="Iida K."/>
            <person name="Akiyama K."/>
            <person name="Satou M."/>
            <person name="Toyoda T."/>
            <person name="Konagaya A."/>
            <person name="Carninci P."/>
            <person name="Kawai J."/>
            <person name="Hayashizaki Y."/>
            <person name="Shinozaki K."/>
        </authorList>
    </citation>
    <scope>NUCLEOTIDE SEQUENCE [LARGE SCALE MRNA]</scope>
    <source>
        <strain>cv. Columbia</strain>
    </source>
</reference>
<reference key="5">
    <citation type="submission" date="2002-03" db="EMBL/GenBank/DDBJ databases">
        <title>Full-length cDNA from Arabidopsis thaliana.</title>
        <authorList>
            <person name="Brover V.V."/>
            <person name="Troukhan M.E."/>
            <person name="Alexandrov N.A."/>
            <person name="Lu Y.-P."/>
            <person name="Flavell R.B."/>
            <person name="Feldmann K.A."/>
        </authorList>
    </citation>
    <scope>NUCLEOTIDE SEQUENCE [LARGE SCALE MRNA]</scope>
</reference>
<sequence>MGEAPAQIPTSFGHELRACLRCRLVKTYDQFRDSGCENCPFFKIEDDHERIVDVTTPNFNGIISMMDPRRSWAARWLRIGKFAPGCYTLAVSEALPEEMQFICQQARVQYVPPKRI</sequence>
<keyword id="KW-0010">Activator</keyword>
<keyword id="KW-0025">Alternative splicing</keyword>
<keyword id="KW-0479">Metal-binding</keyword>
<keyword id="KW-0539">Nucleus</keyword>
<keyword id="KW-1185">Reference proteome</keyword>
<keyword id="KW-0678">Repressor</keyword>
<keyword id="KW-0804">Transcription</keyword>
<keyword id="KW-0805">Transcription regulation</keyword>
<keyword id="KW-0862">Zinc</keyword>
<keyword id="KW-0863">Zinc-finger</keyword>
<name>SPT41_ARATH</name>
<accession>Q8LCQ3</accession>
<accession>Q29PX1</accession>
<dbReference type="EMBL" id="AB006697">
    <property type="status" value="NOT_ANNOTATED_CDS"/>
    <property type="molecule type" value="Genomic_DNA"/>
</dbReference>
<dbReference type="EMBL" id="CP002688">
    <property type="protein sequence ID" value="AED91322.1"/>
    <property type="molecule type" value="Genomic_DNA"/>
</dbReference>
<dbReference type="EMBL" id="BT024785">
    <property type="protein sequence ID" value="ABD59123.1"/>
    <property type="molecule type" value="mRNA"/>
</dbReference>
<dbReference type="EMBL" id="AK228575">
    <property type="protein sequence ID" value="BAF00493.1"/>
    <property type="molecule type" value="mRNA"/>
</dbReference>
<dbReference type="EMBL" id="AY086462">
    <property type="protein sequence ID" value="AAM63465.1"/>
    <property type="molecule type" value="mRNA"/>
</dbReference>
<dbReference type="RefSeq" id="NP_568201.1">
    <molecule id="Q8LCQ3-1"/>
    <property type="nucleotide sequence ID" value="NM_120943.4"/>
</dbReference>
<dbReference type="SMR" id="Q8LCQ3"/>
<dbReference type="BioGRID" id="16035">
    <property type="interactions" value="3"/>
</dbReference>
<dbReference type="FunCoup" id="Q8LCQ3">
    <property type="interactions" value="2581"/>
</dbReference>
<dbReference type="STRING" id="3702.Q8LCQ3"/>
<dbReference type="ProteomicsDB" id="232552">
    <molecule id="Q8LCQ3-1"/>
</dbReference>
<dbReference type="EnsemblPlants" id="AT5G08565.1">
    <molecule id="Q8LCQ3-1"/>
    <property type="protein sequence ID" value="AT5G08565.1"/>
    <property type="gene ID" value="AT5G08565"/>
</dbReference>
<dbReference type="GeneID" id="830757"/>
<dbReference type="Gramene" id="AT5G08565.1">
    <molecule id="Q8LCQ3-1"/>
    <property type="protein sequence ID" value="AT5G08565.1"/>
    <property type="gene ID" value="AT5G08565"/>
</dbReference>
<dbReference type="KEGG" id="ath:AT5G08565"/>
<dbReference type="Araport" id="AT5G08565"/>
<dbReference type="TAIR" id="AT5G08565">
    <property type="gene designation" value="SPT4-1"/>
</dbReference>
<dbReference type="HOGENOM" id="CLU_138052_0_0_1"/>
<dbReference type="InParanoid" id="Q8LCQ3"/>
<dbReference type="OMA" id="NCKNANS"/>
<dbReference type="PhylomeDB" id="Q8LCQ3"/>
<dbReference type="PRO" id="PR:Q8LCQ3"/>
<dbReference type="Proteomes" id="UP000006548">
    <property type="component" value="Chromosome 5"/>
</dbReference>
<dbReference type="ExpressionAtlas" id="Q8LCQ3">
    <property type="expression patterns" value="baseline and differential"/>
</dbReference>
<dbReference type="GO" id="GO:0005634">
    <property type="term" value="C:nucleus"/>
    <property type="evidence" value="ECO:0007669"/>
    <property type="project" value="UniProtKB-SubCell"/>
</dbReference>
<dbReference type="GO" id="GO:0008270">
    <property type="term" value="F:zinc ion binding"/>
    <property type="evidence" value="ECO:0007669"/>
    <property type="project" value="UniProtKB-KW"/>
</dbReference>
<dbReference type="GO" id="GO:0006355">
    <property type="term" value="P:regulation of DNA-templated transcription"/>
    <property type="evidence" value="ECO:0007669"/>
    <property type="project" value="InterPro"/>
</dbReference>
<dbReference type="GO" id="GO:0140673">
    <property type="term" value="P:transcription elongation-coupled chromatin remodeling"/>
    <property type="evidence" value="ECO:0007669"/>
    <property type="project" value="InterPro"/>
</dbReference>
<dbReference type="CDD" id="cd07973">
    <property type="entry name" value="Spt4"/>
    <property type="match status" value="1"/>
</dbReference>
<dbReference type="FunFam" id="3.30.40.210:FF:000002">
    <property type="entry name" value="Transcription elongation factor SPT4 homolog"/>
    <property type="match status" value="1"/>
</dbReference>
<dbReference type="Gene3D" id="3.30.40.210">
    <property type="match status" value="1"/>
</dbReference>
<dbReference type="InterPro" id="IPR029040">
    <property type="entry name" value="RPABC4/Spt4"/>
</dbReference>
<dbReference type="InterPro" id="IPR009287">
    <property type="entry name" value="Spt4"/>
</dbReference>
<dbReference type="InterPro" id="IPR022800">
    <property type="entry name" value="Spt4/RpoE2_Znf"/>
</dbReference>
<dbReference type="InterPro" id="IPR038510">
    <property type="entry name" value="Spt4_sf"/>
</dbReference>
<dbReference type="PANTHER" id="PTHR12882">
    <property type="entry name" value="SUPPRESSOR OF TY 4"/>
    <property type="match status" value="1"/>
</dbReference>
<dbReference type="PANTHER" id="PTHR12882:SF1">
    <property type="entry name" value="TRANSCRIPTION ELONGATION FACTOR SPT4"/>
    <property type="match status" value="1"/>
</dbReference>
<dbReference type="Pfam" id="PF06093">
    <property type="entry name" value="Spt4"/>
    <property type="match status" value="1"/>
</dbReference>
<dbReference type="PIRSF" id="PIRSF025023">
    <property type="entry name" value="Spt4"/>
    <property type="match status" value="1"/>
</dbReference>
<dbReference type="SMART" id="SM01389">
    <property type="entry name" value="Spt4"/>
    <property type="match status" value="1"/>
</dbReference>
<dbReference type="SUPFAM" id="SSF63393">
    <property type="entry name" value="RNA polymerase subunits"/>
    <property type="match status" value="1"/>
</dbReference>